<sequence>MAENLVIVESPAKAKTIEKYLGKKYKVIASMGHVRDLPRSQMGVDAENDYEPKYITIRGKGPVVKELKKHAKKAKKVFLASDPDREGEAIAWHLANILNLEDSTENRVVFNEITKDAVKDSFKHPRGIEMELVDAQQARRILDRLVGYNISPVLWKKVKKGLSAGRVQSVALRLVIDRENEIRNFKPEEYWKIEGEFRYKKTKFTAKFLHFKNKPFKLTEKADVEKITTQLDGDQFEVTKVTKKEKTRYPANPFTTSTLQQEAARKLNFKARKTMMLAQQLYEGIDLKKQGTVGLITYMRTDSTRISDQAQSEAKNYIQETYGNDYTSNRKSKGQGDQDAHEAIRPSSTLRTPNEMKNFLTRDQHRLYKLIWERFVASQMAPAILDTVAMDLTQNDIKFRANGQTIKFKGFMTLYVETKDDSEDGKDNKLPNIGEGEMVTATNIEPSQHFTQPPPRYTEARLVKTMEELKIGRPSTYAPTIDTIQKRNYVKNESKRFVPTELGEIVHEQVKDYFPEIIDVDFTVNMETLLDKVADGEIGWKKVISDFYSSFKQDVERAEEEMEKIEIKDEPAGEDCEVCGSPMVIKMGRYGKFMACSNFPDCRNTKAIVKTIGVTCPKCKEGDVVERKSKKNRIFYGCSKYPECDFVTWDKPIGRDCPKCEHYLVEKKQGRKSQVVCSNCDYKEEEQK</sequence>
<proteinExistence type="inferred from homology"/>
<organism>
    <name type="scientific">Staphylococcus saprophyticus subsp. saprophyticus (strain ATCC 15305 / DSM 20229 / NCIMB 8711 / NCTC 7292 / S-41)</name>
    <dbReference type="NCBI Taxonomy" id="342451"/>
    <lineage>
        <taxon>Bacteria</taxon>
        <taxon>Bacillati</taxon>
        <taxon>Bacillota</taxon>
        <taxon>Bacilli</taxon>
        <taxon>Bacillales</taxon>
        <taxon>Staphylococcaceae</taxon>
        <taxon>Staphylococcus</taxon>
    </lineage>
</organism>
<keyword id="KW-0238">DNA-binding</keyword>
<keyword id="KW-0413">Isomerase</keyword>
<keyword id="KW-0460">Magnesium</keyword>
<keyword id="KW-0479">Metal-binding</keyword>
<keyword id="KW-1185">Reference proteome</keyword>
<keyword id="KW-0677">Repeat</keyword>
<keyword id="KW-0799">Topoisomerase</keyword>
<keyword id="KW-0862">Zinc</keyword>
<keyword id="KW-0863">Zinc-finger</keyword>
<name>TOP1_STAS1</name>
<protein>
    <recommendedName>
        <fullName evidence="1">DNA topoisomerase 1</fullName>
        <ecNumber evidence="1">5.6.2.1</ecNumber>
    </recommendedName>
    <alternativeName>
        <fullName evidence="1">DNA topoisomerase I</fullName>
    </alternativeName>
    <alternativeName>
        <fullName>Omega-protein</fullName>
    </alternativeName>
    <alternativeName>
        <fullName>Relaxing enzyme</fullName>
    </alternativeName>
    <alternativeName>
        <fullName>Swivelase</fullName>
    </alternativeName>
    <alternativeName>
        <fullName>Untwisting enzyme</fullName>
    </alternativeName>
</protein>
<comment type="function">
    <text evidence="1">Releases the supercoiling and torsional tension of DNA, which is introduced during the DNA replication and transcription, by transiently cleaving and rejoining one strand of the DNA duplex. Introduces a single-strand break via transesterification at a target site in duplex DNA. The scissile phosphodiester is attacked by the catalytic tyrosine of the enzyme, resulting in the formation of a DNA-(5'-phosphotyrosyl)-enzyme intermediate and the expulsion of a 3'-OH DNA strand. The free DNA strand then undergoes passage around the unbroken strand, thus removing DNA supercoils. Finally, in the religation step, the DNA 3'-OH attacks the covalent intermediate to expel the active-site tyrosine and restore the DNA phosphodiester backbone.</text>
</comment>
<comment type="catalytic activity">
    <reaction evidence="1">
        <text>ATP-independent breakage of single-stranded DNA, followed by passage and rejoining.</text>
        <dbReference type="EC" id="5.6.2.1"/>
    </reaction>
</comment>
<comment type="cofactor">
    <cofactor evidence="1">
        <name>Mg(2+)</name>
        <dbReference type="ChEBI" id="CHEBI:18420"/>
    </cofactor>
</comment>
<comment type="subunit">
    <text evidence="1">Monomer.</text>
</comment>
<comment type="similarity">
    <text evidence="1">Belongs to the type IA topoisomerase family.</text>
</comment>
<evidence type="ECO:0000255" key="1">
    <source>
        <dbReference type="HAMAP-Rule" id="MF_00952"/>
    </source>
</evidence>
<evidence type="ECO:0000255" key="2">
    <source>
        <dbReference type="PROSITE-ProRule" id="PRU01383"/>
    </source>
</evidence>
<evidence type="ECO:0000256" key="3">
    <source>
        <dbReference type="SAM" id="MobiDB-lite"/>
    </source>
</evidence>
<gene>
    <name evidence="1" type="primary">topA</name>
    <name type="ordered locus">SSP1518</name>
</gene>
<reference key="1">
    <citation type="journal article" date="2005" name="Proc. Natl. Acad. Sci. U.S.A.">
        <title>Whole genome sequence of Staphylococcus saprophyticus reveals the pathogenesis of uncomplicated urinary tract infection.</title>
        <authorList>
            <person name="Kuroda M."/>
            <person name="Yamashita A."/>
            <person name="Hirakawa H."/>
            <person name="Kumano M."/>
            <person name="Morikawa K."/>
            <person name="Higashide M."/>
            <person name="Maruyama A."/>
            <person name="Inose Y."/>
            <person name="Matoba K."/>
            <person name="Toh H."/>
            <person name="Kuhara S."/>
            <person name="Hattori M."/>
            <person name="Ohta T."/>
        </authorList>
    </citation>
    <scope>NUCLEOTIDE SEQUENCE [LARGE SCALE GENOMIC DNA]</scope>
    <source>
        <strain>ATCC 15305 / DSM 20229 / NCIMB 8711 / NCTC 7292 / S-41</strain>
    </source>
</reference>
<accession>Q49X35</accession>
<feature type="chain" id="PRO_0000285947" description="DNA topoisomerase 1">
    <location>
        <begin position="1"/>
        <end position="688"/>
    </location>
</feature>
<feature type="domain" description="Toprim" evidence="1">
    <location>
        <begin position="3"/>
        <end position="113"/>
    </location>
</feature>
<feature type="domain" description="Topo IA-type catalytic" evidence="2">
    <location>
        <begin position="129"/>
        <end position="556"/>
    </location>
</feature>
<feature type="zinc finger region" description="C4-type 1">
    <location>
        <begin position="576"/>
        <end position="602"/>
    </location>
</feature>
<feature type="zinc finger region" description="C4-type 2">
    <location>
        <begin position="616"/>
        <end position="644"/>
    </location>
</feature>
<feature type="zinc finger region" description="C4-type 3">
    <location>
        <begin position="657"/>
        <end position="680"/>
    </location>
</feature>
<feature type="region of interest" description="Interaction with DNA" evidence="1">
    <location>
        <begin position="163"/>
        <end position="168"/>
    </location>
</feature>
<feature type="region of interest" description="Disordered" evidence="3">
    <location>
        <begin position="322"/>
        <end position="349"/>
    </location>
</feature>
<feature type="compositionally biased region" description="Basic and acidic residues" evidence="3">
    <location>
        <begin position="334"/>
        <end position="344"/>
    </location>
</feature>
<feature type="active site" description="O-(5'-phospho-DNA)-tyrosine intermediate" evidence="2">
    <location>
        <position position="298"/>
    </location>
</feature>
<feature type="binding site" evidence="1">
    <location>
        <position position="9"/>
    </location>
    <ligand>
        <name>Mg(2+)</name>
        <dbReference type="ChEBI" id="CHEBI:18420"/>
        <note>catalytic</note>
    </ligand>
</feature>
<feature type="binding site" evidence="1">
    <location>
        <position position="82"/>
    </location>
    <ligand>
        <name>Mg(2+)</name>
        <dbReference type="ChEBI" id="CHEBI:18420"/>
        <note>catalytic</note>
    </ligand>
</feature>
<feature type="site" description="Interaction with DNA" evidence="1">
    <location>
        <position position="33"/>
    </location>
</feature>
<feature type="site" description="Interaction with DNA" evidence="1">
    <location>
        <position position="139"/>
    </location>
</feature>
<feature type="site" description="Interaction with DNA" evidence="1">
    <location>
        <position position="140"/>
    </location>
</feature>
<feature type="site" description="Interaction with DNA" evidence="1">
    <location>
        <position position="143"/>
    </location>
</feature>
<feature type="site" description="Interaction with DNA" evidence="1">
    <location>
        <position position="148"/>
    </location>
</feature>
<feature type="site" description="Interaction with DNA" evidence="1">
    <location>
        <position position="155"/>
    </location>
</feature>
<feature type="site" description="Interaction with DNA" evidence="1">
    <location>
        <position position="300"/>
    </location>
</feature>
<feature type="site" description="Interaction with DNA" evidence="1">
    <location>
        <position position="487"/>
    </location>
</feature>
<dbReference type="EC" id="5.6.2.1" evidence="1"/>
<dbReference type="EMBL" id="AP008934">
    <property type="protein sequence ID" value="BAE18663.1"/>
    <property type="molecule type" value="Genomic_DNA"/>
</dbReference>
<dbReference type="RefSeq" id="WP_011303268.1">
    <property type="nucleotide sequence ID" value="NZ_MTGA01000034.1"/>
</dbReference>
<dbReference type="SMR" id="Q49X35"/>
<dbReference type="GeneID" id="3615164"/>
<dbReference type="KEGG" id="ssp:SSP1518"/>
<dbReference type="PATRIC" id="fig|342451.11.peg.1520"/>
<dbReference type="eggNOG" id="COG0550">
    <property type="taxonomic scope" value="Bacteria"/>
</dbReference>
<dbReference type="HOGENOM" id="CLU_002929_4_3_9"/>
<dbReference type="OrthoDB" id="9804262at2"/>
<dbReference type="Proteomes" id="UP000006371">
    <property type="component" value="Chromosome"/>
</dbReference>
<dbReference type="GO" id="GO:0005694">
    <property type="term" value="C:chromosome"/>
    <property type="evidence" value="ECO:0007669"/>
    <property type="project" value="InterPro"/>
</dbReference>
<dbReference type="GO" id="GO:0003677">
    <property type="term" value="F:DNA binding"/>
    <property type="evidence" value="ECO:0007669"/>
    <property type="project" value="UniProtKB-KW"/>
</dbReference>
<dbReference type="GO" id="GO:0003917">
    <property type="term" value="F:DNA topoisomerase type I (single strand cut, ATP-independent) activity"/>
    <property type="evidence" value="ECO:0007669"/>
    <property type="project" value="UniProtKB-UniRule"/>
</dbReference>
<dbReference type="GO" id="GO:0008270">
    <property type="term" value="F:zinc ion binding"/>
    <property type="evidence" value="ECO:0007669"/>
    <property type="project" value="UniProtKB-KW"/>
</dbReference>
<dbReference type="GO" id="GO:0006265">
    <property type="term" value="P:DNA topological change"/>
    <property type="evidence" value="ECO:0007669"/>
    <property type="project" value="UniProtKB-UniRule"/>
</dbReference>
<dbReference type="CDD" id="cd00186">
    <property type="entry name" value="TOP1Ac"/>
    <property type="match status" value="1"/>
</dbReference>
<dbReference type="CDD" id="cd03363">
    <property type="entry name" value="TOPRIM_TopoIA_TopoI"/>
    <property type="match status" value="1"/>
</dbReference>
<dbReference type="Gene3D" id="3.40.50.140">
    <property type="match status" value="1"/>
</dbReference>
<dbReference type="Gene3D" id="3.30.65.10">
    <property type="entry name" value="Bacterial Topoisomerase I, domain 1"/>
    <property type="match status" value="2"/>
</dbReference>
<dbReference type="Gene3D" id="1.10.460.10">
    <property type="entry name" value="Topoisomerase I, domain 2"/>
    <property type="match status" value="1"/>
</dbReference>
<dbReference type="Gene3D" id="2.70.20.10">
    <property type="entry name" value="Topoisomerase I, domain 3"/>
    <property type="match status" value="1"/>
</dbReference>
<dbReference type="Gene3D" id="1.10.290.10">
    <property type="entry name" value="Topoisomerase I, domain 4"/>
    <property type="match status" value="1"/>
</dbReference>
<dbReference type="HAMAP" id="MF_00952">
    <property type="entry name" value="Topoisom_1_prok"/>
    <property type="match status" value="1"/>
</dbReference>
<dbReference type="InterPro" id="IPR000380">
    <property type="entry name" value="Topo_IA"/>
</dbReference>
<dbReference type="InterPro" id="IPR003601">
    <property type="entry name" value="Topo_IA_2"/>
</dbReference>
<dbReference type="InterPro" id="IPR023406">
    <property type="entry name" value="Topo_IA_AS"/>
</dbReference>
<dbReference type="InterPro" id="IPR013497">
    <property type="entry name" value="Topo_IA_cen"/>
</dbReference>
<dbReference type="InterPro" id="IPR013824">
    <property type="entry name" value="Topo_IA_cen_sub1"/>
</dbReference>
<dbReference type="InterPro" id="IPR013825">
    <property type="entry name" value="Topo_IA_cen_sub2"/>
</dbReference>
<dbReference type="InterPro" id="IPR013826">
    <property type="entry name" value="Topo_IA_cen_sub3"/>
</dbReference>
<dbReference type="InterPro" id="IPR023405">
    <property type="entry name" value="Topo_IA_core_domain"/>
</dbReference>
<dbReference type="InterPro" id="IPR003602">
    <property type="entry name" value="Topo_IA_DNA-bd_dom"/>
</dbReference>
<dbReference type="InterPro" id="IPR013498">
    <property type="entry name" value="Topo_IA_Znf"/>
</dbReference>
<dbReference type="InterPro" id="IPR005733">
    <property type="entry name" value="TopoI_bac-type"/>
</dbReference>
<dbReference type="InterPro" id="IPR028612">
    <property type="entry name" value="Topoisom_1_IA"/>
</dbReference>
<dbReference type="InterPro" id="IPR006171">
    <property type="entry name" value="TOPRIM_dom"/>
</dbReference>
<dbReference type="InterPro" id="IPR034149">
    <property type="entry name" value="TOPRIM_TopoI"/>
</dbReference>
<dbReference type="NCBIfam" id="TIGR01051">
    <property type="entry name" value="topA_bact"/>
    <property type="match status" value="1"/>
</dbReference>
<dbReference type="PANTHER" id="PTHR42785:SF1">
    <property type="entry name" value="DNA TOPOISOMERASE"/>
    <property type="match status" value="1"/>
</dbReference>
<dbReference type="PANTHER" id="PTHR42785">
    <property type="entry name" value="DNA TOPOISOMERASE, TYPE IA, CORE"/>
    <property type="match status" value="1"/>
</dbReference>
<dbReference type="Pfam" id="PF01131">
    <property type="entry name" value="Topoisom_bac"/>
    <property type="match status" value="1"/>
</dbReference>
<dbReference type="Pfam" id="PF01751">
    <property type="entry name" value="Toprim"/>
    <property type="match status" value="1"/>
</dbReference>
<dbReference type="Pfam" id="PF01396">
    <property type="entry name" value="Zn_ribbon_Top1"/>
    <property type="match status" value="3"/>
</dbReference>
<dbReference type="PRINTS" id="PR00417">
    <property type="entry name" value="PRTPISMRASEI"/>
</dbReference>
<dbReference type="SMART" id="SM00437">
    <property type="entry name" value="TOP1Ac"/>
    <property type="match status" value="1"/>
</dbReference>
<dbReference type="SMART" id="SM00436">
    <property type="entry name" value="TOP1Bc"/>
    <property type="match status" value="1"/>
</dbReference>
<dbReference type="SMART" id="SM00493">
    <property type="entry name" value="TOPRIM"/>
    <property type="match status" value="1"/>
</dbReference>
<dbReference type="SUPFAM" id="SSF56712">
    <property type="entry name" value="Prokaryotic type I DNA topoisomerase"/>
    <property type="match status" value="1"/>
</dbReference>
<dbReference type="PROSITE" id="PS00396">
    <property type="entry name" value="TOPO_IA_1"/>
    <property type="match status" value="1"/>
</dbReference>
<dbReference type="PROSITE" id="PS52039">
    <property type="entry name" value="TOPO_IA_2"/>
    <property type="match status" value="1"/>
</dbReference>
<dbReference type="PROSITE" id="PS50880">
    <property type="entry name" value="TOPRIM"/>
    <property type="match status" value="1"/>
</dbReference>